<proteinExistence type="evidence at transcript level"/>
<reference key="1">
    <citation type="journal article" date="1999" name="Nature">
        <title>Sequence and analysis of chromosome 4 of the plant Arabidopsis thaliana.</title>
        <authorList>
            <person name="Mayer K.F.X."/>
            <person name="Schueller C."/>
            <person name="Wambutt R."/>
            <person name="Murphy G."/>
            <person name="Volckaert G."/>
            <person name="Pohl T."/>
            <person name="Duesterhoeft A."/>
            <person name="Stiekema W."/>
            <person name="Entian K.-D."/>
            <person name="Terryn N."/>
            <person name="Harris B."/>
            <person name="Ansorge W."/>
            <person name="Brandt P."/>
            <person name="Grivell L.A."/>
            <person name="Rieger M."/>
            <person name="Weichselgartner M."/>
            <person name="de Simone V."/>
            <person name="Obermaier B."/>
            <person name="Mache R."/>
            <person name="Mueller M."/>
            <person name="Kreis M."/>
            <person name="Delseny M."/>
            <person name="Puigdomenech P."/>
            <person name="Watson M."/>
            <person name="Schmidtheini T."/>
            <person name="Reichert B."/>
            <person name="Portetelle D."/>
            <person name="Perez-Alonso M."/>
            <person name="Boutry M."/>
            <person name="Bancroft I."/>
            <person name="Vos P."/>
            <person name="Hoheisel J."/>
            <person name="Zimmermann W."/>
            <person name="Wedler H."/>
            <person name="Ridley P."/>
            <person name="Langham S.-A."/>
            <person name="McCullagh B."/>
            <person name="Bilham L."/>
            <person name="Robben J."/>
            <person name="van der Schueren J."/>
            <person name="Grymonprez B."/>
            <person name="Chuang Y.-J."/>
            <person name="Vandenbussche F."/>
            <person name="Braeken M."/>
            <person name="Weltjens I."/>
            <person name="Voet M."/>
            <person name="Bastiaens I."/>
            <person name="Aert R."/>
            <person name="Defoor E."/>
            <person name="Weitzenegger T."/>
            <person name="Bothe G."/>
            <person name="Ramsperger U."/>
            <person name="Hilbert H."/>
            <person name="Braun M."/>
            <person name="Holzer E."/>
            <person name="Brandt A."/>
            <person name="Peters S."/>
            <person name="van Staveren M."/>
            <person name="Dirkse W."/>
            <person name="Mooijman P."/>
            <person name="Klein Lankhorst R."/>
            <person name="Rose M."/>
            <person name="Hauf J."/>
            <person name="Koetter P."/>
            <person name="Berneiser S."/>
            <person name="Hempel S."/>
            <person name="Feldpausch M."/>
            <person name="Lamberth S."/>
            <person name="Van den Daele H."/>
            <person name="De Keyser A."/>
            <person name="Buysshaert C."/>
            <person name="Gielen J."/>
            <person name="Villarroel R."/>
            <person name="De Clercq R."/>
            <person name="van Montagu M."/>
            <person name="Rogers J."/>
            <person name="Cronin A."/>
            <person name="Quail M.A."/>
            <person name="Bray-Allen S."/>
            <person name="Clark L."/>
            <person name="Doggett J."/>
            <person name="Hall S."/>
            <person name="Kay M."/>
            <person name="Lennard N."/>
            <person name="McLay K."/>
            <person name="Mayes R."/>
            <person name="Pettett A."/>
            <person name="Rajandream M.A."/>
            <person name="Lyne M."/>
            <person name="Benes V."/>
            <person name="Rechmann S."/>
            <person name="Borkova D."/>
            <person name="Bloecker H."/>
            <person name="Scharfe M."/>
            <person name="Grimm M."/>
            <person name="Loehnert T.-H."/>
            <person name="Dose S."/>
            <person name="de Haan M."/>
            <person name="Maarse A.C."/>
            <person name="Schaefer M."/>
            <person name="Mueller-Auer S."/>
            <person name="Gabel C."/>
            <person name="Fuchs M."/>
            <person name="Fartmann B."/>
            <person name="Granderath K."/>
            <person name="Dauner D."/>
            <person name="Herzl A."/>
            <person name="Neumann S."/>
            <person name="Argiriou A."/>
            <person name="Vitale D."/>
            <person name="Liguori R."/>
            <person name="Piravandi E."/>
            <person name="Massenet O."/>
            <person name="Quigley F."/>
            <person name="Clabauld G."/>
            <person name="Muendlein A."/>
            <person name="Felber R."/>
            <person name="Schnabl S."/>
            <person name="Hiller R."/>
            <person name="Schmidt W."/>
            <person name="Lecharny A."/>
            <person name="Aubourg S."/>
            <person name="Chefdor F."/>
            <person name="Cooke R."/>
            <person name="Berger C."/>
            <person name="Monfort A."/>
            <person name="Casacuberta E."/>
            <person name="Gibbons T."/>
            <person name="Weber N."/>
            <person name="Vandenbol M."/>
            <person name="Bargues M."/>
            <person name="Terol J."/>
            <person name="Torres A."/>
            <person name="Perez-Perez A."/>
            <person name="Purnelle B."/>
            <person name="Bent E."/>
            <person name="Johnson S."/>
            <person name="Tacon D."/>
            <person name="Jesse T."/>
            <person name="Heijnen L."/>
            <person name="Schwarz S."/>
            <person name="Scholler P."/>
            <person name="Heber S."/>
            <person name="Francs P."/>
            <person name="Bielke C."/>
            <person name="Frishman D."/>
            <person name="Haase D."/>
            <person name="Lemcke K."/>
            <person name="Mewes H.-W."/>
            <person name="Stocker S."/>
            <person name="Zaccaria P."/>
            <person name="Bevan M."/>
            <person name="Wilson R.K."/>
            <person name="de la Bastide M."/>
            <person name="Habermann K."/>
            <person name="Parnell L."/>
            <person name="Dedhia N."/>
            <person name="Gnoj L."/>
            <person name="Schutz K."/>
            <person name="Huang E."/>
            <person name="Spiegel L."/>
            <person name="Sekhon M."/>
            <person name="Murray J."/>
            <person name="Sheet P."/>
            <person name="Cordes M."/>
            <person name="Abu-Threideh J."/>
            <person name="Stoneking T."/>
            <person name="Kalicki J."/>
            <person name="Graves T."/>
            <person name="Harmon G."/>
            <person name="Edwards J."/>
            <person name="Latreille P."/>
            <person name="Courtney L."/>
            <person name="Cloud J."/>
            <person name="Abbott A."/>
            <person name="Scott K."/>
            <person name="Johnson D."/>
            <person name="Minx P."/>
            <person name="Bentley D."/>
            <person name="Fulton B."/>
            <person name="Miller N."/>
            <person name="Greco T."/>
            <person name="Kemp K."/>
            <person name="Kramer J."/>
            <person name="Fulton L."/>
            <person name="Mardis E."/>
            <person name="Dante M."/>
            <person name="Pepin K."/>
            <person name="Hillier L.W."/>
            <person name="Nelson J."/>
            <person name="Spieth J."/>
            <person name="Ryan E."/>
            <person name="Andrews S."/>
            <person name="Geisel C."/>
            <person name="Layman D."/>
            <person name="Du H."/>
            <person name="Ali J."/>
            <person name="Berghoff A."/>
            <person name="Jones K."/>
            <person name="Drone K."/>
            <person name="Cotton M."/>
            <person name="Joshu C."/>
            <person name="Antonoiu B."/>
            <person name="Zidanic M."/>
            <person name="Strong C."/>
            <person name="Sun H."/>
            <person name="Lamar B."/>
            <person name="Yordan C."/>
            <person name="Ma P."/>
            <person name="Zhong J."/>
            <person name="Preston R."/>
            <person name="Vil D."/>
            <person name="Shekher M."/>
            <person name="Matero A."/>
            <person name="Shah R."/>
            <person name="Swaby I.K."/>
            <person name="O'Shaughnessy A."/>
            <person name="Rodriguez M."/>
            <person name="Hoffman J."/>
            <person name="Till S."/>
            <person name="Granat S."/>
            <person name="Shohdy N."/>
            <person name="Hasegawa A."/>
            <person name="Hameed A."/>
            <person name="Lodhi M."/>
            <person name="Johnson A."/>
            <person name="Chen E."/>
            <person name="Marra M.A."/>
            <person name="Martienssen R."/>
            <person name="McCombie W.R."/>
        </authorList>
    </citation>
    <scope>NUCLEOTIDE SEQUENCE [LARGE SCALE GENOMIC DNA]</scope>
    <source>
        <strain>cv. Columbia</strain>
    </source>
</reference>
<reference key="2">
    <citation type="journal article" date="2017" name="Plant J.">
        <title>Araport11: a complete reannotation of the Arabidopsis thaliana reference genome.</title>
        <authorList>
            <person name="Cheng C.Y."/>
            <person name="Krishnakumar V."/>
            <person name="Chan A.P."/>
            <person name="Thibaud-Nissen F."/>
            <person name="Schobel S."/>
            <person name="Town C.D."/>
        </authorList>
    </citation>
    <scope>GENOME REANNOTATION</scope>
    <source>
        <strain>cv. Columbia</strain>
    </source>
</reference>
<reference key="3">
    <citation type="journal article" date="2005" name="Genome Res.">
        <title>Whole genome shotgun sequencing of Brassica oleracea and its application to gene discovery and annotation in Arabidopsis.</title>
        <authorList>
            <person name="Ayele M."/>
            <person name="Haas B.J."/>
            <person name="Kumar N."/>
            <person name="Wu H."/>
            <person name="Xiao Y."/>
            <person name="Van Aken S."/>
            <person name="Utterback T.R."/>
            <person name="Wortman J.R."/>
            <person name="White O.R."/>
            <person name="Town C.D."/>
        </authorList>
    </citation>
    <scope>NUCLEOTIDE SEQUENCE [LARGE SCALE MRNA]</scope>
</reference>
<reference key="4">
    <citation type="submission" date="2005-01" db="EMBL/GenBank/DDBJ databases">
        <title>Arabidopsis ORF clones.</title>
        <authorList>
            <person name="Kim C.J."/>
            <person name="Chen H."/>
            <person name="Cheuk R.F."/>
            <person name="Shinn P."/>
            <person name="Ecker J.R."/>
        </authorList>
    </citation>
    <scope>NUCLEOTIDE SEQUENCE [LARGE SCALE MRNA]</scope>
    <source>
        <strain>cv. Columbia</strain>
    </source>
</reference>
<reference key="5">
    <citation type="journal article" date="2006" name="Development">
        <title>The Arabidopsis elch mutant reveals functions of an ESCRT component in cytokinesis.</title>
        <authorList>
            <person name="Spitzer C."/>
            <person name="Schellmann S."/>
            <person name="Sabovljevic A."/>
            <person name="Shahriari M."/>
            <person name="Keshavaiah C."/>
            <person name="Bechtold N."/>
            <person name="Herzog M."/>
            <person name="Mueller S."/>
            <person name="Hanisch F.-G."/>
            <person name="Huelskamp M."/>
        </authorList>
    </citation>
    <scope>IDENTIFICATION</scope>
    <scope>NOMENCLATURE</scope>
</reference>
<reference key="6">
    <citation type="journal article" date="2006" name="Trends Plant Sci.">
        <title>Exploring the ESCRTing machinery in eukaryotes.</title>
        <authorList>
            <person name="Winter V."/>
            <person name="Hauser M.-T."/>
        </authorList>
    </citation>
    <scope>IDENTIFICATION</scope>
</reference>
<feature type="chain" id="PRO_0000368191" description="Vacuolar protein sorting-associated protein 22 homolog 1">
    <location>
        <begin position="1"/>
        <end position="250"/>
    </location>
</feature>
<feature type="coiled-coil region" evidence="2">
    <location>
        <begin position="35"/>
        <end position="55"/>
    </location>
</feature>
<feature type="sequence conflict" description="In Ref. 4; AAV91335/AAW70398." evidence="3" ref="4">
    <original>R</original>
    <variation>G</variation>
    <location>
        <position position="17"/>
    </location>
</feature>
<comment type="function">
    <text evidence="1">Component of the endosomal sorting complex required for transport II (ESCRT-II), which is required for multivesicular body (MVB) formation and sorting of endosomal cargo proteins into MVBs. The ESCRT-II complex is probably involved in the recruitment of the ESCRT-III complex (By similarity).</text>
</comment>
<comment type="subunit">
    <text evidence="1">Component of the endosomal sorting complex required for transport II (ESCRT-II), composed of VPS22, VPS25 and VPS36.</text>
</comment>
<comment type="subcellular location">
    <subcellularLocation>
        <location evidence="1">Endosome</location>
    </subcellularLocation>
</comment>
<comment type="similarity">
    <text evidence="3">Belongs to the SNF8 family.</text>
</comment>
<comment type="sequence caution" evidence="3">
    <conflict type="erroneous gene model prediction">
        <sequence resource="EMBL-CDS" id="CAB36550"/>
    </conflict>
</comment>
<comment type="sequence caution" evidence="3">
    <conflict type="erroneous gene model prediction">
        <sequence resource="EMBL-CDS" id="CAB79559"/>
    </conflict>
</comment>
<evidence type="ECO:0000250" key="1"/>
<evidence type="ECO:0000255" key="2"/>
<evidence type="ECO:0000305" key="3"/>
<dbReference type="EMBL" id="AL035440">
    <property type="protein sequence ID" value="CAB36550.1"/>
    <property type="status" value="ALT_SEQ"/>
    <property type="molecule type" value="Genomic_DNA"/>
</dbReference>
<dbReference type="EMBL" id="AL161566">
    <property type="protein sequence ID" value="CAB79559.1"/>
    <property type="status" value="ALT_SEQ"/>
    <property type="molecule type" value="Genomic_DNA"/>
</dbReference>
<dbReference type="EMBL" id="CP002687">
    <property type="protein sequence ID" value="AEE85287.1"/>
    <property type="molecule type" value="Genomic_DNA"/>
</dbReference>
<dbReference type="EMBL" id="CP002687">
    <property type="protein sequence ID" value="AEE85288.1"/>
    <property type="molecule type" value="Genomic_DNA"/>
</dbReference>
<dbReference type="EMBL" id="CP002687">
    <property type="protein sequence ID" value="AEE85289.1"/>
    <property type="molecule type" value="Genomic_DNA"/>
</dbReference>
<dbReference type="EMBL" id="CP002687">
    <property type="protein sequence ID" value="AEE85290.1"/>
    <property type="molecule type" value="Genomic_DNA"/>
</dbReference>
<dbReference type="EMBL" id="CP002687">
    <property type="protein sequence ID" value="ANM66725.1"/>
    <property type="molecule type" value="Genomic_DNA"/>
</dbReference>
<dbReference type="EMBL" id="CP002687">
    <property type="protein sequence ID" value="ANM66726.1"/>
    <property type="molecule type" value="Genomic_DNA"/>
</dbReference>
<dbReference type="EMBL" id="AY299265">
    <property type="status" value="NOT_ANNOTATED_CDS"/>
    <property type="molecule type" value="mRNA"/>
</dbReference>
<dbReference type="EMBL" id="BT020389">
    <property type="protein sequence ID" value="AAV91335.1"/>
    <property type="molecule type" value="mRNA"/>
</dbReference>
<dbReference type="EMBL" id="BT020552">
    <property type="protein sequence ID" value="AAW70398.1"/>
    <property type="molecule type" value="mRNA"/>
</dbReference>
<dbReference type="PIR" id="T04827">
    <property type="entry name" value="T04827"/>
</dbReference>
<dbReference type="RefSeq" id="NP_001119065.1">
    <property type="nucleotide sequence ID" value="NM_001125593.1"/>
</dbReference>
<dbReference type="RefSeq" id="NP_001119066.1">
    <property type="nucleotide sequence ID" value="NM_001125594.1"/>
</dbReference>
<dbReference type="RefSeq" id="NP_001119067.1">
    <property type="nucleotide sequence ID" value="NM_001125595.2"/>
</dbReference>
<dbReference type="RefSeq" id="NP_001328603.1">
    <property type="nucleotide sequence ID" value="NM_001341835.1"/>
</dbReference>
<dbReference type="RefSeq" id="NP_001328604.1">
    <property type="nucleotide sequence ID" value="NM_001341834.1"/>
</dbReference>
<dbReference type="RefSeq" id="NP_194434.2">
    <property type="nucleotide sequence ID" value="NM_118838.5"/>
</dbReference>
<dbReference type="SMR" id="Q5M759"/>
<dbReference type="BioGRID" id="14099">
    <property type="interactions" value="6"/>
</dbReference>
<dbReference type="FunCoup" id="Q5M759">
    <property type="interactions" value="4017"/>
</dbReference>
<dbReference type="IntAct" id="Q5M759">
    <property type="interactions" value="5"/>
</dbReference>
<dbReference type="STRING" id="3702.Q5M759"/>
<dbReference type="TCDB" id="3.A.31.1.2">
    <property type="family name" value="the endosomal sorting complexes required for transport iii (escrt-iii) family"/>
</dbReference>
<dbReference type="PaxDb" id="3702-AT4G27040.2"/>
<dbReference type="ProteomicsDB" id="242623"/>
<dbReference type="DNASU" id="828812"/>
<dbReference type="EnsemblPlants" id="AT4G27040.1">
    <property type="protein sequence ID" value="AT4G27040.1"/>
    <property type="gene ID" value="AT4G27040"/>
</dbReference>
<dbReference type="EnsemblPlants" id="AT4G27040.2">
    <property type="protein sequence ID" value="AT4G27040.2"/>
    <property type="gene ID" value="AT4G27040"/>
</dbReference>
<dbReference type="EnsemblPlants" id="AT4G27040.3">
    <property type="protein sequence ID" value="AT4G27040.3"/>
    <property type="gene ID" value="AT4G27040"/>
</dbReference>
<dbReference type="EnsemblPlants" id="AT4G27040.4">
    <property type="protein sequence ID" value="AT4G27040.4"/>
    <property type="gene ID" value="AT4G27040"/>
</dbReference>
<dbReference type="EnsemblPlants" id="AT4G27040.5">
    <property type="protein sequence ID" value="AT4G27040.5"/>
    <property type="gene ID" value="AT4G27040"/>
</dbReference>
<dbReference type="EnsemblPlants" id="AT4G27040.6">
    <property type="protein sequence ID" value="AT4G27040.6"/>
    <property type="gene ID" value="AT4G27040"/>
</dbReference>
<dbReference type="GeneID" id="828812"/>
<dbReference type="Gramene" id="AT4G27040.1">
    <property type="protein sequence ID" value="AT4G27040.1"/>
    <property type="gene ID" value="AT4G27040"/>
</dbReference>
<dbReference type="Gramene" id="AT4G27040.2">
    <property type="protein sequence ID" value="AT4G27040.2"/>
    <property type="gene ID" value="AT4G27040"/>
</dbReference>
<dbReference type="Gramene" id="AT4G27040.3">
    <property type="protein sequence ID" value="AT4G27040.3"/>
    <property type="gene ID" value="AT4G27040"/>
</dbReference>
<dbReference type="Gramene" id="AT4G27040.4">
    <property type="protein sequence ID" value="AT4G27040.4"/>
    <property type="gene ID" value="AT4G27040"/>
</dbReference>
<dbReference type="Gramene" id="AT4G27040.5">
    <property type="protein sequence ID" value="AT4G27040.5"/>
    <property type="gene ID" value="AT4G27040"/>
</dbReference>
<dbReference type="Gramene" id="AT4G27040.6">
    <property type="protein sequence ID" value="AT4G27040.6"/>
    <property type="gene ID" value="AT4G27040"/>
</dbReference>
<dbReference type="KEGG" id="ath:AT4G27040"/>
<dbReference type="Araport" id="AT4G27040"/>
<dbReference type="TAIR" id="AT4G27040">
    <property type="gene designation" value="VPS22"/>
</dbReference>
<dbReference type="eggNOG" id="KOG3341">
    <property type="taxonomic scope" value="Eukaryota"/>
</dbReference>
<dbReference type="HOGENOM" id="CLU_070147_2_0_1"/>
<dbReference type="InParanoid" id="Q5M759"/>
<dbReference type="OMA" id="QIVEVCM"/>
<dbReference type="OrthoDB" id="283883at2759"/>
<dbReference type="PRO" id="PR:Q5M759"/>
<dbReference type="Proteomes" id="UP000006548">
    <property type="component" value="Chromosome 4"/>
</dbReference>
<dbReference type="ExpressionAtlas" id="Q5M759">
    <property type="expression patterns" value="baseline and differential"/>
</dbReference>
<dbReference type="GO" id="GO:0000814">
    <property type="term" value="C:ESCRT II complex"/>
    <property type="evidence" value="ECO:0000250"/>
    <property type="project" value="TAIR"/>
</dbReference>
<dbReference type="GO" id="GO:0071985">
    <property type="term" value="P:multivesicular body sorting pathway"/>
    <property type="evidence" value="ECO:0007669"/>
    <property type="project" value="InterPro"/>
</dbReference>
<dbReference type="GO" id="GO:0015031">
    <property type="term" value="P:protein transport"/>
    <property type="evidence" value="ECO:0007669"/>
    <property type="project" value="UniProtKB-KW"/>
</dbReference>
<dbReference type="FunFam" id="1.10.10.10:FF:000363">
    <property type="entry name" value="Vacuolar protein sorting-associated protein"/>
    <property type="match status" value="1"/>
</dbReference>
<dbReference type="FunFam" id="1.10.10.10:FF:000085">
    <property type="entry name" value="Vacuolar-sorting protein SNF8"/>
    <property type="match status" value="1"/>
</dbReference>
<dbReference type="Gene3D" id="6.10.140.180">
    <property type="match status" value="1"/>
</dbReference>
<dbReference type="Gene3D" id="1.10.10.10">
    <property type="entry name" value="Winged helix-like DNA-binding domain superfamily/Winged helix DNA-binding domain"/>
    <property type="match status" value="2"/>
</dbReference>
<dbReference type="InterPro" id="IPR016689">
    <property type="entry name" value="ESCRT-2_cplx_Snf8"/>
</dbReference>
<dbReference type="InterPro" id="IPR040608">
    <property type="entry name" value="Snf8/Vps36"/>
</dbReference>
<dbReference type="InterPro" id="IPR036388">
    <property type="entry name" value="WH-like_DNA-bd_sf"/>
</dbReference>
<dbReference type="InterPro" id="IPR036390">
    <property type="entry name" value="WH_DNA-bd_sf"/>
</dbReference>
<dbReference type="PANTHER" id="PTHR12806">
    <property type="entry name" value="EAP30 SUBUNIT OF ELL COMPLEX"/>
    <property type="match status" value="1"/>
</dbReference>
<dbReference type="PANTHER" id="PTHR12806:SF0">
    <property type="entry name" value="VACUOLAR-SORTING PROTEIN SNF8"/>
    <property type="match status" value="1"/>
</dbReference>
<dbReference type="Pfam" id="PF04157">
    <property type="entry name" value="EAP30"/>
    <property type="match status" value="1"/>
</dbReference>
<dbReference type="PIRSF" id="PIRSF017215">
    <property type="entry name" value="ESCRT2_Vps22"/>
    <property type="match status" value="1"/>
</dbReference>
<dbReference type="SUPFAM" id="SSF46785">
    <property type="entry name" value="Winged helix' DNA-binding domain"/>
    <property type="match status" value="2"/>
</dbReference>
<accession>Q5M759</accession>
<accession>Q9SZ43</accession>
<name>VP221_ARATH</name>
<sequence length="250" mass="28310">MRRRPGIGGLQKAAAARDQYRLLGENVAKLRTDMMKEQLSTFRSQLEEFARKHKNDIRKNPAFRAQFHEMCANIGVDPLASNKGFWAELLGIGDFYYELGVQIIEVCMLTRSHNGGLISLQELCNHLRQRRKKDREAVTEDDCLRAISKLKVLGSGFEVITIGKKKLVRSVPTELNKDHNQILELAQGQGFVIVEEVQRRLSWTSGRVIDALETLLEEGLAMIDNGHKDGKCRYWFPCVSSVYSSIGSDT</sequence>
<gene>
    <name type="primary">VP22-1</name>
    <name type="ordered locus">At4g27040</name>
    <name type="ORF">F10M23.380</name>
</gene>
<protein>
    <recommendedName>
        <fullName>Vacuolar protein sorting-associated protein 22 homolog 1</fullName>
        <shortName>AtVPS22-1</shortName>
    </recommendedName>
    <alternativeName>
        <fullName>ESCRT-II complex subunit VPS22 homolog 1</fullName>
    </alternativeName>
</protein>
<organism>
    <name type="scientific">Arabidopsis thaliana</name>
    <name type="common">Mouse-ear cress</name>
    <dbReference type="NCBI Taxonomy" id="3702"/>
    <lineage>
        <taxon>Eukaryota</taxon>
        <taxon>Viridiplantae</taxon>
        <taxon>Streptophyta</taxon>
        <taxon>Embryophyta</taxon>
        <taxon>Tracheophyta</taxon>
        <taxon>Spermatophyta</taxon>
        <taxon>Magnoliopsida</taxon>
        <taxon>eudicotyledons</taxon>
        <taxon>Gunneridae</taxon>
        <taxon>Pentapetalae</taxon>
        <taxon>rosids</taxon>
        <taxon>malvids</taxon>
        <taxon>Brassicales</taxon>
        <taxon>Brassicaceae</taxon>
        <taxon>Camelineae</taxon>
        <taxon>Arabidopsis</taxon>
    </lineage>
</organism>
<keyword id="KW-0175">Coiled coil</keyword>
<keyword id="KW-0967">Endosome</keyword>
<keyword id="KW-0653">Protein transport</keyword>
<keyword id="KW-1185">Reference proteome</keyword>
<keyword id="KW-0813">Transport</keyword>